<proteinExistence type="evidence at transcript level"/>
<accession>Q5W6H5</accession>
<accession>A3B2Y5</accession>
<accession>B7ENB3</accession>
<organism>
    <name type="scientific">Oryza sativa subsp. japonica</name>
    <name type="common">Rice</name>
    <dbReference type="NCBI Taxonomy" id="39947"/>
    <lineage>
        <taxon>Eukaryota</taxon>
        <taxon>Viridiplantae</taxon>
        <taxon>Streptophyta</taxon>
        <taxon>Embryophyta</taxon>
        <taxon>Tracheophyta</taxon>
        <taxon>Spermatophyta</taxon>
        <taxon>Magnoliopsida</taxon>
        <taxon>Liliopsida</taxon>
        <taxon>Poales</taxon>
        <taxon>Poaceae</taxon>
        <taxon>BOP clade</taxon>
        <taxon>Oryzoideae</taxon>
        <taxon>Oryzeae</taxon>
        <taxon>Oryzinae</taxon>
        <taxon>Oryza</taxon>
        <taxon>Oryza sativa</taxon>
    </lineage>
</organism>
<feature type="transit peptide" description="Chloroplast" evidence="1">
    <location>
        <begin position="1"/>
        <end position="47"/>
    </location>
</feature>
<feature type="chain" id="PRO_0000285117" description="Chlorophyll synthase, chloroplastic">
    <location>
        <begin position="48"/>
        <end position="376"/>
    </location>
</feature>
<feature type="transmembrane region" description="Helical" evidence="1">
    <location>
        <begin position="95"/>
        <end position="115"/>
    </location>
</feature>
<feature type="transmembrane region" description="Helical" evidence="1">
    <location>
        <begin position="171"/>
        <end position="191"/>
    </location>
</feature>
<feature type="transmembrane region" description="Helical" evidence="1">
    <location>
        <begin position="197"/>
        <end position="217"/>
    </location>
</feature>
<feature type="transmembrane region" description="Helical" evidence="1">
    <location>
        <begin position="230"/>
        <end position="250"/>
    </location>
</feature>
<feature type="transmembrane region" description="Helical" evidence="1">
    <location>
        <begin position="255"/>
        <end position="275"/>
    </location>
</feature>
<feature type="transmembrane region" description="Helical" evidence="1">
    <location>
        <begin position="300"/>
        <end position="320"/>
    </location>
</feature>
<feature type="transmembrane region" description="Helical" evidence="1">
    <location>
        <begin position="325"/>
        <end position="345"/>
    </location>
</feature>
<feature type="transmembrane region" description="Helical" evidence="1">
    <location>
        <begin position="355"/>
        <end position="375"/>
    </location>
</feature>
<feature type="region of interest" description="Disordered" evidence="2">
    <location>
        <begin position="48"/>
        <end position="69"/>
    </location>
</feature>
<reference key="1">
    <citation type="journal article" date="2005" name="Mol. Genet. Genomics">
        <title>A fine physical map of the rice chromosome 5.</title>
        <authorList>
            <person name="Cheng C.-H."/>
            <person name="Chung M.C."/>
            <person name="Liu S.-M."/>
            <person name="Chen S.-K."/>
            <person name="Kao F.Y."/>
            <person name="Lin S.-J."/>
            <person name="Hsiao S.-H."/>
            <person name="Tseng I.C."/>
            <person name="Hsing Y.-I.C."/>
            <person name="Wu H.-P."/>
            <person name="Chen C.-S."/>
            <person name="Shaw J.-F."/>
            <person name="Wu J."/>
            <person name="Matsumoto T."/>
            <person name="Sasaki T."/>
            <person name="Chen H.-C."/>
            <person name="Chow T.-Y."/>
        </authorList>
    </citation>
    <scope>NUCLEOTIDE SEQUENCE [LARGE SCALE GENOMIC DNA]</scope>
    <source>
        <strain>cv. Nipponbare</strain>
    </source>
</reference>
<reference key="2">
    <citation type="journal article" date="2005" name="Nature">
        <title>The map-based sequence of the rice genome.</title>
        <authorList>
            <consortium name="International rice genome sequencing project (IRGSP)"/>
        </authorList>
    </citation>
    <scope>NUCLEOTIDE SEQUENCE [LARGE SCALE GENOMIC DNA]</scope>
    <source>
        <strain>cv. Nipponbare</strain>
    </source>
</reference>
<reference key="3">
    <citation type="journal article" date="2008" name="Nucleic Acids Res.">
        <title>The rice annotation project database (RAP-DB): 2008 update.</title>
        <authorList>
            <consortium name="The rice annotation project (RAP)"/>
        </authorList>
    </citation>
    <scope>GENOME REANNOTATION</scope>
    <source>
        <strain>cv. Nipponbare</strain>
    </source>
</reference>
<reference key="4">
    <citation type="journal article" date="2013" name="Rice">
        <title>Improvement of the Oryza sativa Nipponbare reference genome using next generation sequence and optical map data.</title>
        <authorList>
            <person name="Kawahara Y."/>
            <person name="de la Bastide M."/>
            <person name="Hamilton J.P."/>
            <person name="Kanamori H."/>
            <person name="McCombie W.R."/>
            <person name="Ouyang S."/>
            <person name="Schwartz D.C."/>
            <person name="Tanaka T."/>
            <person name="Wu J."/>
            <person name="Zhou S."/>
            <person name="Childs K.L."/>
            <person name="Davidson R.M."/>
            <person name="Lin H."/>
            <person name="Quesada-Ocampo L."/>
            <person name="Vaillancourt B."/>
            <person name="Sakai H."/>
            <person name="Lee S.S."/>
            <person name="Kim J."/>
            <person name="Numa H."/>
            <person name="Itoh T."/>
            <person name="Buell C.R."/>
            <person name="Matsumoto T."/>
        </authorList>
    </citation>
    <scope>GENOME REANNOTATION</scope>
    <source>
        <strain>cv. Nipponbare</strain>
    </source>
</reference>
<reference key="5">
    <citation type="journal article" date="2005" name="PLoS Biol.">
        <title>The genomes of Oryza sativa: a history of duplications.</title>
        <authorList>
            <person name="Yu J."/>
            <person name="Wang J."/>
            <person name="Lin W."/>
            <person name="Li S."/>
            <person name="Li H."/>
            <person name="Zhou J."/>
            <person name="Ni P."/>
            <person name="Dong W."/>
            <person name="Hu S."/>
            <person name="Zeng C."/>
            <person name="Zhang J."/>
            <person name="Zhang Y."/>
            <person name="Li R."/>
            <person name="Xu Z."/>
            <person name="Li S."/>
            <person name="Li X."/>
            <person name="Zheng H."/>
            <person name="Cong L."/>
            <person name="Lin L."/>
            <person name="Yin J."/>
            <person name="Geng J."/>
            <person name="Li G."/>
            <person name="Shi J."/>
            <person name="Liu J."/>
            <person name="Lv H."/>
            <person name="Li J."/>
            <person name="Wang J."/>
            <person name="Deng Y."/>
            <person name="Ran L."/>
            <person name="Shi X."/>
            <person name="Wang X."/>
            <person name="Wu Q."/>
            <person name="Li C."/>
            <person name="Ren X."/>
            <person name="Wang J."/>
            <person name="Wang X."/>
            <person name="Li D."/>
            <person name="Liu D."/>
            <person name="Zhang X."/>
            <person name="Ji Z."/>
            <person name="Zhao W."/>
            <person name="Sun Y."/>
            <person name="Zhang Z."/>
            <person name="Bao J."/>
            <person name="Han Y."/>
            <person name="Dong L."/>
            <person name="Ji J."/>
            <person name="Chen P."/>
            <person name="Wu S."/>
            <person name="Liu J."/>
            <person name="Xiao Y."/>
            <person name="Bu D."/>
            <person name="Tan J."/>
            <person name="Yang L."/>
            <person name="Ye C."/>
            <person name="Zhang J."/>
            <person name="Xu J."/>
            <person name="Zhou Y."/>
            <person name="Yu Y."/>
            <person name="Zhang B."/>
            <person name="Zhuang S."/>
            <person name="Wei H."/>
            <person name="Liu B."/>
            <person name="Lei M."/>
            <person name="Yu H."/>
            <person name="Li Y."/>
            <person name="Xu H."/>
            <person name="Wei S."/>
            <person name="He X."/>
            <person name="Fang L."/>
            <person name="Zhang Z."/>
            <person name="Zhang Y."/>
            <person name="Huang X."/>
            <person name="Su Z."/>
            <person name="Tong W."/>
            <person name="Li J."/>
            <person name="Tong Z."/>
            <person name="Li S."/>
            <person name="Ye J."/>
            <person name="Wang L."/>
            <person name="Fang L."/>
            <person name="Lei T."/>
            <person name="Chen C.-S."/>
            <person name="Chen H.-C."/>
            <person name="Xu Z."/>
            <person name="Li H."/>
            <person name="Huang H."/>
            <person name="Zhang F."/>
            <person name="Xu H."/>
            <person name="Li N."/>
            <person name="Zhao C."/>
            <person name="Li S."/>
            <person name="Dong L."/>
            <person name="Huang Y."/>
            <person name="Li L."/>
            <person name="Xi Y."/>
            <person name="Qi Q."/>
            <person name="Li W."/>
            <person name="Zhang B."/>
            <person name="Hu W."/>
            <person name="Zhang Y."/>
            <person name="Tian X."/>
            <person name="Jiao Y."/>
            <person name="Liang X."/>
            <person name="Jin J."/>
            <person name="Gao L."/>
            <person name="Zheng W."/>
            <person name="Hao B."/>
            <person name="Liu S.-M."/>
            <person name="Wang W."/>
            <person name="Yuan L."/>
            <person name="Cao M."/>
            <person name="McDermott J."/>
            <person name="Samudrala R."/>
            <person name="Wang J."/>
            <person name="Wong G.K.-S."/>
            <person name="Yang H."/>
        </authorList>
    </citation>
    <scope>NUCLEOTIDE SEQUENCE [LARGE SCALE GENOMIC DNA]</scope>
    <source>
        <strain>cv. Nipponbare</strain>
    </source>
</reference>
<reference key="6">
    <citation type="journal article" date="2003" name="Science">
        <title>Collection, mapping, and annotation of over 28,000 cDNA clones from japonica rice.</title>
        <authorList>
            <consortium name="The rice full-length cDNA consortium"/>
        </authorList>
    </citation>
    <scope>NUCLEOTIDE SEQUENCE [LARGE SCALE MRNA]</scope>
    <source>
        <strain>cv. Nipponbare</strain>
    </source>
</reference>
<protein>
    <recommendedName>
        <fullName>Chlorophyll synthase, chloroplastic</fullName>
        <ecNumber>2.5.1.62</ecNumber>
    </recommendedName>
    <alternativeName>
        <fullName>Polyprenyl transferase</fullName>
    </alternativeName>
</protein>
<comment type="function">
    <text>Involved in one of the last steps of the biosynthesis of chlorophyll a.</text>
</comment>
<comment type="catalytic activity">
    <reaction>
        <text>phytyl diphosphate + chlorophyllide a + H(+) = chlorophyll a + diphosphate</text>
        <dbReference type="Rhea" id="RHEA:17317"/>
        <dbReference type="ChEBI" id="CHEBI:15378"/>
        <dbReference type="ChEBI" id="CHEBI:33019"/>
        <dbReference type="ChEBI" id="CHEBI:58416"/>
        <dbReference type="ChEBI" id="CHEBI:75434"/>
        <dbReference type="ChEBI" id="CHEBI:83348"/>
        <dbReference type="EC" id="2.5.1.62"/>
    </reaction>
</comment>
<comment type="subcellular location">
    <subcellularLocation>
        <location evidence="3">Plastid</location>
        <location evidence="3">Chloroplast membrane</location>
        <topology evidence="3">Multi-pass membrane protein</topology>
    </subcellularLocation>
</comment>
<comment type="similarity">
    <text evidence="3">Belongs to the UbiA prenyltransferase family. Chlorophyll synthase subfamily.</text>
</comment>
<sequence>MATSHLLAAASSTAASSATFRPPLLSLRSPPPSSLRLNRRRHFQVVRAAETDKETKANAPEKAPAGGSSFNQLLGIKGAKQENDIWKIRLQLTKPVTWPPLVWGVLCGAAASGNFHWTVEDVAKSIVCMIMSGPCLTGYTQTINDWYDRDIDAINEPYRPIPSGAISENEVITQIWALLLAGLGLGALLDVWAGHDFPIIFYLAVGGSLLSYIYSAPPLKLKQNGWIGNFALGASYIGLPWWAGQALFGTLTPDIVVLTSLYSIAGLGIAIVNDFKSVEGDRALGLQSLPVAFGMETAKWICVGAIDITQLSVAGYLFSSGKPYYALALLGLTIPQVVFQFQYFLKDPVKYDVKYQASAQPFFVLGLLVTALATSH</sequence>
<evidence type="ECO:0000255" key="1"/>
<evidence type="ECO:0000256" key="2">
    <source>
        <dbReference type="SAM" id="MobiDB-lite"/>
    </source>
</evidence>
<evidence type="ECO:0000305" key="3"/>
<evidence type="ECO:0000312" key="4">
    <source>
        <dbReference type="EMBL" id="EEE63355.1"/>
    </source>
</evidence>
<name>CHLG_ORYSJ</name>
<keyword id="KW-0149">Chlorophyll biosynthesis</keyword>
<keyword id="KW-0150">Chloroplast</keyword>
<keyword id="KW-0472">Membrane</keyword>
<keyword id="KW-0934">Plastid</keyword>
<keyword id="KW-1185">Reference proteome</keyword>
<keyword id="KW-0808">Transferase</keyword>
<keyword id="KW-0809">Transit peptide</keyword>
<keyword id="KW-0812">Transmembrane</keyword>
<keyword id="KW-1133">Transmembrane helix</keyword>
<dbReference type="EC" id="2.5.1.62"/>
<dbReference type="EMBL" id="AC136221">
    <property type="protein sequence ID" value="AAV44065.1"/>
    <property type="molecule type" value="Genomic_DNA"/>
</dbReference>
<dbReference type="EMBL" id="AP008211">
    <property type="protein sequence ID" value="BAF17186.1"/>
    <property type="molecule type" value="Genomic_DNA"/>
</dbReference>
<dbReference type="EMBL" id="AP014961">
    <property type="protein sequence ID" value="BAS93526.1"/>
    <property type="molecule type" value="Genomic_DNA"/>
</dbReference>
<dbReference type="EMBL" id="CM000142">
    <property type="protein sequence ID" value="EEE63355.1"/>
    <property type="molecule type" value="Genomic_DNA"/>
</dbReference>
<dbReference type="EMBL" id="AK099004">
    <property type="protein sequence ID" value="BAG93860.1"/>
    <property type="molecule type" value="mRNA"/>
</dbReference>
<dbReference type="RefSeq" id="XP_015637650.1">
    <property type="nucleotide sequence ID" value="XM_015782164.1"/>
</dbReference>
<dbReference type="SMR" id="Q5W6H5"/>
<dbReference type="FunCoup" id="Q5W6H5">
    <property type="interactions" value="653"/>
</dbReference>
<dbReference type="STRING" id="39947.Q5W6H5"/>
<dbReference type="PaxDb" id="39947-Q5W6H5"/>
<dbReference type="EnsemblPlants" id="Os05t0349700-01">
    <property type="protein sequence ID" value="Os05t0349700-01"/>
    <property type="gene ID" value="Os05g0349700"/>
</dbReference>
<dbReference type="EnsemblPlants" id="Os05t0349700-02">
    <property type="protein sequence ID" value="Os05t0349700-02"/>
    <property type="gene ID" value="Os05g0349700"/>
</dbReference>
<dbReference type="Gramene" id="Os05t0349700-01">
    <property type="protein sequence ID" value="Os05t0349700-01"/>
    <property type="gene ID" value="Os05g0349700"/>
</dbReference>
<dbReference type="Gramene" id="Os05t0349700-02">
    <property type="protein sequence ID" value="Os05t0349700-02"/>
    <property type="gene ID" value="Os05g0349700"/>
</dbReference>
<dbReference type="KEGG" id="dosa:Os05g0349700"/>
<dbReference type="eggNOG" id="ENOG502QQMP">
    <property type="taxonomic scope" value="Eukaryota"/>
</dbReference>
<dbReference type="HOGENOM" id="CLU_042598_1_0_1"/>
<dbReference type="InParanoid" id="Q5W6H5"/>
<dbReference type="OMA" id="QDMYFLR"/>
<dbReference type="OrthoDB" id="434972at2759"/>
<dbReference type="PlantReactome" id="R-OSA-1119320">
    <property type="pathway name" value="Chlorophyll cycle"/>
</dbReference>
<dbReference type="PlantReactome" id="R-OSA-1119412">
    <property type="pathway name" value="Chlorophyll a biosynthesis I"/>
</dbReference>
<dbReference type="Proteomes" id="UP000000763">
    <property type="component" value="Chromosome 5"/>
</dbReference>
<dbReference type="Proteomes" id="UP000007752">
    <property type="component" value="Chromosome 5"/>
</dbReference>
<dbReference type="Proteomes" id="UP000059680">
    <property type="component" value="Chromosome 5"/>
</dbReference>
<dbReference type="ExpressionAtlas" id="Q5W6H5">
    <property type="expression patterns" value="baseline and differential"/>
</dbReference>
<dbReference type="GO" id="GO:0031969">
    <property type="term" value="C:chloroplast membrane"/>
    <property type="evidence" value="ECO:0007669"/>
    <property type="project" value="UniProtKB-SubCell"/>
</dbReference>
<dbReference type="GO" id="GO:0046408">
    <property type="term" value="F:chlorophyll synthetase activity"/>
    <property type="evidence" value="ECO:0007669"/>
    <property type="project" value="UniProtKB-EC"/>
</dbReference>
<dbReference type="GO" id="GO:0015995">
    <property type="term" value="P:chlorophyll biosynthetic process"/>
    <property type="evidence" value="ECO:0007669"/>
    <property type="project" value="UniProtKB-KW"/>
</dbReference>
<dbReference type="CDD" id="cd13958">
    <property type="entry name" value="PT_UbiA_chlorophyll"/>
    <property type="match status" value="1"/>
</dbReference>
<dbReference type="FunFam" id="1.10.357.140:FF:000015">
    <property type="entry name" value="Chlorophyll synthase, chloroplastic"/>
    <property type="match status" value="1"/>
</dbReference>
<dbReference type="Gene3D" id="1.10.357.140">
    <property type="entry name" value="UbiA prenyltransferase"/>
    <property type="match status" value="1"/>
</dbReference>
<dbReference type="Gene3D" id="1.20.120.1780">
    <property type="entry name" value="UbiA prenyltransferase"/>
    <property type="match status" value="1"/>
</dbReference>
<dbReference type="InterPro" id="IPR006372">
    <property type="entry name" value="Chl_synth"/>
</dbReference>
<dbReference type="InterPro" id="IPR011799">
    <property type="entry name" value="ChlG"/>
</dbReference>
<dbReference type="InterPro" id="IPR050475">
    <property type="entry name" value="Prenyltransferase_related"/>
</dbReference>
<dbReference type="InterPro" id="IPR000537">
    <property type="entry name" value="UbiA_prenyltransferase"/>
</dbReference>
<dbReference type="InterPro" id="IPR044878">
    <property type="entry name" value="UbiA_sf"/>
</dbReference>
<dbReference type="NCBIfam" id="TIGR02056">
    <property type="entry name" value="ChlG"/>
    <property type="match status" value="1"/>
</dbReference>
<dbReference type="NCBIfam" id="TIGR01476">
    <property type="entry name" value="chlor_syn_BchG"/>
    <property type="match status" value="1"/>
</dbReference>
<dbReference type="NCBIfam" id="NF005742">
    <property type="entry name" value="PRK07566.1"/>
    <property type="match status" value="1"/>
</dbReference>
<dbReference type="PANTHER" id="PTHR42723">
    <property type="entry name" value="CHLOROPHYLL SYNTHASE"/>
    <property type="match status" value="1"/>
</dbReference>
<dbReference type="PANTHER" id="PTHR42723:SF1">
    <property type="entry name" value="CHLOROPHYLL SYNTHASE, CHLOROPLASTIC"/>
    <property type="match status" value="1"/>
</dbReference>
<dbReference type="Pfam" id="PF01040">
    <property type="entry name" value="UbiA"/>
    <property type="match status" value="1"/>
</dbReference>
<gene>
    <name type="primary">CHLG</name>
    <name type="ordered locus">Os05g0349700</name>
    <name type="ordered locus">LOC_Os05g28200</name>
    <name evidence="4" type="ORF">OsJ_18166</name>
    <name type="ORF">OSJNBa0077J17.3</name>
</gene>